<geneLocation type="mitochondrion"/>
<dbReference type="EC" id="7.1.1.2"/>
<dbReference type="EMBL" id="AY376688">
    <property type="protein sequence ID" value="AAQ74269.1"/>
    <property type="molecule type" value="Genomic_DNA"/>
</dbReference>
<dbReference type="RefSeq" id="YP_025850.1">
    <property type="nucleotide sequence ID" value="NC_005927.1"/>
</dbReference>
<dbReference type="SMR" id="Q6U7Y2"/>
<dbReference type="STRING" id="554373.Q6U7Y2"/>
<dbReference type="GeneID" id="2846938"/>
<dbReference type="InParanoid" id="Q6U7Y2"/>
<dbReference type="PhylomeDB" id="Q6U7Y2"/>
<dbReference type="GO" id="GO:0005743">
    <property type="term" value="C:mitochondrial inner membrane"/>
    <property type="evidence" value="ECO:0000250"/>
    <property type="project" value="UniProtKB"/>
</dbReference>
<dbReference type="GO" id="GO:0030964">
    <property type="term" value="C:NADH dehydrogenase complex"/>
    <property type="evidence" value="ECO:0007669"/>
    <property type="project" value="TreeGrafter"/>
</dbReference>
<dbReference type="GO" id="GO:0008137">
    <property type="term" value="F:NADH dehydrogenase (ubiquinone) activity"/>
    <property type="evidence" value="ECO:0007669"/>
    <property type="project" value="UniProtKB-EC"/>
</dbReference>
<dbReference type="GO" id="GO:0042773">
    <property type="term" value="P:ATP synthesis coupled electron transport"/>
    <property type="evidence" value="ECO:0007669"/>
    <property type="project" value="InterPro"/>
</dbReference>
<dbReference type="FunFam" id="1.10.287.3510:FF:000004">
    <property type="entry name" value="NADH-ubiquinone oxidoreductase chain 4L"/>
    <property type="match status" value="1"/>
</dbReference>
<dbReference type="Gene3D" id="1.10.287.3510">
    <property type="match status" value="1"/>
</dbReference>
<dbReference type="InterPro" id="IPR001133">
    <property type="entry name" value="NADH_UbQ_OxRdtase_chain4L/K"/>
</dbReference>
<dbReference type="InterPro" id="IPR039428">
    <property type="entry name" value="NUOK/Mnh_C1-like"/>
</dbReference>
<dbReference type="PANTHER" id="PTHR11434:SF16">
    <property type="entry name" value="NADH-UBIQUINONE OXIDOREDUCTASE CHAIN 4L"/>
    <property type="match status" value="1"/>
</dbReference>
<dbReference type="PANTHER" id="PTHR11434">
    <property type="entry name" value="NADH-UBIQUINONE OXIDOREDUCTASE SUBUNIT ND4L"/>
    <property type="match status" value="1"/>
</dbReference>
<dbReference type="Pfam" id="PF00420">
    <property type="entry name" value="Oxidored_q2"/>
    <property type="match status" value="1"/>
</dbReference>
<organism>
    <name type="scientific">Moniliophthora perniciosa (strain FA553 / isolate CP02)</name>
    <name type="common">Witches'-broom disease fungus</name>
    <name type="synonym">Marasmius perniciosus</name>
    <dbReference type="NCBI Taxonomy" id="554373"/>
    <lineage>
        <taxon>Eukaryota</taxon>
        <taxon>Fungi</taxon>
        <taxon>Dikarya</taxon>
        <taxon>Basidiomycota</taxon>
        <taxon>Agaricomycotina</taxon>
        <taxon>Agaricomycetes</taxon>
        <taxon>Agaricomycetidae</taxon>
        <taxon>Agaricales</taxon>
        <taxon>Marasmiineae</taxon>
        <taxon>Marasmiaceae</taxon>
        <taxon>Moniliophthora</taxon>
    </lineage>
</organism>
<gene>
    <name type="primary">ND4L</name>
    <name type="synonym">NAD4L</name>
</gene>
<feature type="chain" id="PRO_0000118409" description="NADH-ubiquinone oxidoreductase chain 4L">
    <location>
        <begin position="1"/>
        <end position="87"/>
    </location>
</feature>
<feature type="transmembrane region" description="Helical" evidence="2">
    <location>
        <begin position="1"/>
        <end position="21"/>
    </location>
</feature>
<feature type="transmembrane region" description="Helical" evidence="2">
    <location>
        <begin position="22"/>
        <end position="42"/>
    </location>
</feature>
<feature type="transmembrane region" description="Helical" evidence="2">
    <location>
        <begin position="57"/>
        <end position="77"/>
    </location>
</feature>
<protein>
    <recommendedName>
        <fullName>NADH-ubiquinone oxidoreductase chain 4L</fullName>
        <ecNumber>7.1.1.2</ecNumber>
    </recommendedName>
    <alternativeName>
        <fullName>NADH dehydrogenase subunit 4L</fullName>
    </alternativeName>
</protein>
<sequence length="87" mass="9658">MNLSIFLFLIGILGFILNRKNIILMIIAIEIMLLAVTLLVLISSFGFDDNVGQTFSLYIISIAGAESVIGLSILVAFYRLFLVLNYL</sequence>
<reference key="1">
    <citation type="journal article" date="2008" name="Mycol. Res.">
        <title>The mitochondrial genome of the phytopathogenic basidiomycete Moniliophthora perniciosa is 109 kb in size and contains a stable integrated plasmid.</title>
        <authorList>
            <person name="Formighieri E.F."/>
            <person name="Tiburcio R.A."/>
            <person name="Armas E.D."/>
            <person name="Medrano F.J."/>
            <person name="Shimo H."/>
            <person name="Carels N."/>
            <person name="Goes-Neto A."/>
            <person name="Cotomacci C."/>
            <person name="Carazzolle M.F."/>
            <person name="Sardinha-Pinto N."/>
            <person name="Thomazella D.P.T."/>
            <person name="Rincones J."/>
            <person name="Digiampietri L."/>
            <person name="Carraro D.M."/>
            <person name="Azeredo-Espin A.M."/>
            <person name="Reis S.F."/>
            <person name="Deckmann A.C."/>
            <person name="Gramacho K."/>
            <person name="Goncalves M.S."/>
            <person name="Moura Neto J.P."/>
            <person name="Barbosa L.V."/>
            <person name="Meinhardt L.W."/>
            <person name="Cascardo J.C.M."/>
            <person name="Pereira G.A.G."/>
        </authorList>
    </citation>
    <scope>NUCLEOTIDE SEQUENCE [LARGE SCALE GENOMIC DNA]</scope>
    <source>
        <strain>FA553 / isolate CP02</strain>
    </source>
</reference>
<proteinExistence type="inferred from homology"/>
<name>NU4LM_MONPE</name>
<accession>Q6U7Y2</accession>
<keyword id="KW-0249">Electron transport</keyword>
<keyword id="KW-0472">Membrane</keyword>
<keyword id="KW-0496">Mitochondrion</keyword>
<keyword id="KW-0999">Mitochondrion inner membrane</keyword>
<keyword id="KW-0520">NAD</keyword>
<keyword id="KW-0679">Respiratory chain</keyword>
<keyword id="KW-1278">Translocase</keyword>
<keyword id="KW-0812">Transmembrane</keyword>
<keyword id="KW-1133">Transmembrane helix</keyword>
<keyword id="KW-0813">Transport</keyword>
<keyword id="KW-0830">Ubiquinone</keyword>
<evidence type="ECO:0000250" key="1">
    <source>
        <dbReference type="UniProtKB" id="P03902"/>
    </source>
</evidence>
<evidence type="ECO:0000255" key="2"/>
<evidence type="ECO:0000305" key="3"/>
<comment type="function">
    <text evidence="1">Core subunit of the mitochondrial membrane respiratory chain NADH dehydrogenase (Complex I) which catalyzes electron transfer from NADH through the respiratory chain, using ubiquinone as an electron acceptor.</text>
</comment>
<comment type="catalytic activity">
    <reaction>
        <text>a ubiquinone + NADH + 5 H(+)(in) = a ubiquinol + NAD(+) + 4 H(+)(out)</text>
        <dbReference type="Rhea" id="RHEA:29091"/>
        <dbReference type="Rhea" id="RHEA-COMP:9565"/>
        <dbReference type="Rhea" id="RHEA-COMP:9566"/>
        <dbReference type="ChEBI" id="CHEBI:15378"/>
        <dbReference type="ChEBI" id="CHEBI:16389"/>
        <dbReference type="ChEBI" id="CHEBI:17976"/>
        <dbReference type="ChEBI" id="CHEBI:57540"/>
        <dbReference type="ChEBI" id="CHEBI:57945"/>
        <dbReference type="EC" id="7.1.1.2"/>
    </reaction>
</comment>
<comment type="subunit">
    <text evidence="1">Core subunit of respiratory chain NADH dehydrogenase (Complex I) which is composed of 45 different subunits.</text>
</comment>
<comment type="subcellular location">
    <subcellularLocation>
        <location evidence="1">Mitochondrion inner membrane</location>
        <topology evidence="2">Multi-pass membrane protein</topology>
    </subcellularLocation>
</comment>
<comment type="similarity">
    <text evidence="3">Belongs to the complex I subunit 4L family.</text>
</comment>